<name>PTH_NOSP7</name>
<protein>
    <recommendedName>
        <fullName evidence="1">Peptidyl-tRNA hydrolase</fullName>
        <shortName evidence="1">Pth</shortName>
        <ecNumber evidence="1">3.1.1.29</ecNumber>
    </recommendedName>
</protein>
<reference key="1">
    <citation type="journal article" date="2013" name="Plant Physiol.">
        <title>A Nostoc punctiforme Sugar Transporter Necessary to Establish a Cyanobacterium-Plant Symbiosis.</title>
        <authorList>
            <person name="Ekman M."/>
            <person name="Picossi S."/>
            <person name="Campbell E.L."/>
            <person name="Meeks J.C."/>
            <person name="Flores E."/>
        </authorList>
    </citation>
    <scope>NUCLEOTIDE SEQUENCE [LARGE SCALE GENOMIC DNA]</scope>
    <source>
        <strain>ATCC 29133 / PCC 73102</strain>
    </source>
</reference>
<sequence>MTEAATQPALVIPQLIVGLGNPESKYDQTRHNIGFAAVEALSRSWRISLAENRKFQGEYGEGMAPGGGKIRLLKPLTYMNRSGQSIQAVTSWYKLPPESVLIIYDDMDLPLGKTRLRLSGSAGGHNGMKSAIAHLSTQNFPRLRIGIGKPKGAADNDDSNTVSHVLGRFSSAENQQMSLVLQFVVECIELSLKQGVEKAMNVCNSRTINNSES</sequence>
<feature type="chain" id="PRO_1000092963" description="Peptidyl-tRNA hydrolase">
    <location>
        <begin position="1"/>
        <end position="213"/>
    </location>
</feature>
<feature type="active site" description="Proton acceptor" evidence="1">
    <location>
        <position position="31"/>
    </location>
</feature>
<feature type="binding site" evidence="1">
    <location>
        <position position="26"/>
    </location>
    <ligand>
        <name>tRNA</name>
        <dbReference type="ChEBI" id="CHEBI:17843"/>
    </ligand>
</feature>
<feature type="binding site" evidence="1">
    <location>
        <position position="78"/>
    </location>
    <ligand>
        <name>tRNA</name>
        <dbReference type="ChEBI" id="CHEBI:17843"/>
    </ligand>
</feature>
<feature type="binding site" evidence="1">
    <location>
        <position position="80"/>
    </location>
    <ligand>
        <name>tRNA</name>
        <dbReference type="ChEBI" id="CHEBI:17843"/>
    </ligand>
</feature>
<feature type="binding site" evidence="1">
    <location>
        <position position="126"/>
    </location>
    <ligand>
        <name>tRNA</name>
        <dbReference type="ChEBI" id="CHEBI:17843"/>
    </ligand>
</feature>
<feature type="site" description="Discriminates between blocked and unblocked aminoacyl-tRNA" evidence="1">
    <location>
        <position position="21"/>
    </location>
</feature>
<feature type="site" description="Stabilizes the basic form of H active site to accept a proton" evidence="1">
    <location>
        <position position="105"/>
    </location>
</feature>
<proteinExistence type="inferred from homology"/>
<dbReference type="EC" id="3.1.1.29" evidence="1"/>
<dbReference type="EMBL" id="CP001037">
    <property type="protein sequence ID" value="ACC82692.1"/>
    <property type="molecule type" value="Genomic_DNA"/>
</dbReference>
<dbReference type="RefSeq" id="WP_012410657.1">
    <property type="nucleotide sequence ID" value="NC_010628.1"/>
</dbReference>
<dbReference type="SMR" id="B2JA15"/>
<dbReference type="STRING" id="63737.Npun_F4317"/>
<dbReference type="EnsemblBacteria" id="ACC82692">
    <property type="protein sequence ID" value="ACC82692"/>
    <property type="gene ID" value="Npun_F4317"/>
</dbReference>
<dbReference type="KEGG" id="npu:Npun_F4317"/>
<dbReference type="eggNOG" id="COG0193">
    <property type="taxonomic scope" value="Bacteria"/>
</dbReference>
<dbReference type="HOGENOM" id="CLU_062456_4_1_3"/>
<dbReference type="OrthoDB" id="9800507at2"/>
<dbReference type="PhylomeDB" id="B2JA15"/>
<dbReference type="Proteomes" id="UP000001191">
    <property type="component" value="Chromosome"/>
</dbReference>
<dbReference type="GO" id="GO:0005737">
    <property type="term" value="C:cytoplasm"/>
    <property type="evidence" value="ECO:0007669"/>
    <property type="project" value="UniProtKB-SubCell"/>
</dbReference>
<dbReference type="GO" id="GO:0004045">
    <property type="term" value="F:peptidyl-tRNA hydrolase activity"/>
    <property type="evidence" value="ECO:0007669"/>
    <property type="project" value="UniProtKB-UniRule"/>
</dbReference>
<dbReference type="GO" id="GO:0000049">
    <property type="term" value="F:tRNA binding"/>
    <property type="evidence" value="ECO:0007669"/>
    <property type="project" value="UniProtKB-UniRule"/>
</dbReference>
<dbReference type="GO" id="GO:0006515">
    <property type="term" value="P:protein quality control for misfolded or incompletely synthesized proteins"/>
    <property type="evidence" value="ECO:0007669"/>
    <property type="project" value="UniProtKB-UniRule"/>
</dbReference>
<dbReference type="GO" id="GO:0072344">
    <property type="term" value="P:rescue of stalled ribosome"/>
    <property type="evidence" value="ECO:0007669"/>
    <property type="project" value="UniProtKB-UniRule"/>
</dbReference>
<dbReference type="CDD" id="cd00462">
    <property type="entry name" value="PTH"/>
    <property type="match status" value="1"/>
</dbReference>
<dbReference type="FunFam" id="3.40.50.1470:FF:000001">
    <property type="entry name" value="Peptidyl-tRNA hydrolase"/>
    <property type="match status" value="1"/>
</dbReference>
<dbReference type="Gene3D" id="3.40.50.1470">
    <property type="entry name" value="Peptidyl-tRNA hydrolase"/>
    <property type="match status" value="1"/>
</dbReference>
<dbReference type="HAMAP" id="MF_00083">
    <property type="entry name" value="Pept_tRNA_hydro_bact"/>
    <property type="match status" value="1"/>
</dbReference>
<dbReference type="InterPro" id="IPR001328">
    <property type="entry name" value="Pept_tRNA_hydro"/>
</dbReference>
<dbReference type="InterPro" id="IPR018171">
    <property type="entry name" value="Pept_tRNA_hydro_CS"/>
</dbReference>
<dbReference type="InterPro" id="IPR036416">
    <property type="entry name" value="Pept_tRNA_hydro_sf"/>
</dbReference>
<dbReference type="NCBIfam" id="TIGR00447">
    <property type="entry name" value="pth"/>
    <property type="match status" value="1"/>
</dbReference>
<dbReference type="PANTHER" id="PTHR17224">
    <property type="entry name" value="PEPTIDYL-TRNA HYDROLASE"/>
    <property type="match status" value="1"/>
</dbReference>
<dbReference type="PANTHER" id="PTHR17224:SF1">
    <property type="entry name" value="PEPTIDYL-TRNA HYDROLASE"/>
    <property type="match status" value="1"/>
</dbReference>
<dbReference type="Pfam" id="PF01195">
    <property type="entry name" value="Pept_tRNA_hydro"/>
    <property type="match status" value="1"/>
</dbReference>
<dbReference type="SUPFAM" id="SSF53178">
    <property type="entry name" value="Peptidyl-tRNA hydrolase-like"/>
    <property type="match status" value="1"/>
</dbReference>
<dbReference type="PROSITE" id="PS01195">
    <property type="entry name" value="PEPT_TRNA_HYDROL_1"/>
    <property type="match status" value="1"/>
</dbReference>
<comment type="function">
    <text evidence="1">Hydrolyzes ribosome-free peptidyl-tRNAs (with 1 or more amino acids incorporated), which drop off the ribosome during protein synthesis, or as a result of ribosome stalling.</text>
</comment>
<comment type="function">
    <text evidence="1">Catalyzes the release of premature peptidyl moieties from peptidyl-tRNA molecules trapped in stalled 50S ribosomal subunits, and thus maintains levels of free tRNAs and 50S ribosomes.</text>
</comment>
<comment type="catalytic activity">
    <reaction evidence="1">
        <text>an N-acyl-L-alpha-aminoacyl-tRNA + H2O = an N-acyl-L-amino acid + a tRNA + H(+)</text>
        <dbReference type="Rhea" id="RHEA:54448"/>
        <dbReference type="Rhea" id="RHEA-COMP:10123"/>
        <dbReference type="Rhea" id="RHEA-COMP:13883"/>
        <dbReference type="ChEBI" id="CHEBI:15377"/>
        <dbReference type="ChEBI" id="CHEBI:15378"/>
        <dbReference type="ChEBI" id="CHEBI:59874"/>
        <dbReference type="ChEBI" id="CHEBI:78442"/>
        <dbReference type="ChEBI" id="CHEBI:138191"/>
        <dbReference type="EC" id="3.1.1.29"/>
    </reaction>
</comment>
<comment type="subunit">
    <text evidence="1">Monomer.</text>
</comment>
<comment type="subcellular location">
    <subcellularLocation>
        <location evidence="1">Cytoplasm</location>
    </subcellularLocation>
</comment>
<comment type="similarity">
    <text evidence="1">Belongs to the PTH family.</text>
</comment>
<keyword id="KW-0963">Cytoplasm</keyword>
<keyword id="KW-0378">Hydrolase</keyword>
<keyword id="KW-1185">Reference proteome</keyword>
<keyword id="KW-0694">RNA-binding</keyword>
<keyword id="KW-0820">tRNA-binding</keyword>
<gene>
    <name evidence="1" type="primary">pth</name>
    <name type="ordered locus">Npun_F4317</name>
</gene>
<evidence type="ECO:0000255" key="1">
    <source>
        <dbReference type="HAMAP-Rule" id="MF_00083"/>
    </source>
</evidence>
<accession>B2JA15</accession>
<organism>
    <name type="scientific">Nostoc punctiforme (strain ATCC 29133 / PCC 73102)</name>
    <dbReference type="NCBI Taxonomy" id="63737"/>
    <lineage>
        <taxon>Bacteria</taxon>
        <taxon>Bacillati</taxon>
        <taxon>Cyanobacteriota</taxon>
        <taxon>Cyanophyceae</taxon>
        <taxon>Nostocales</taxon>
        <taxon>Nostocaceae</taxon>
        <taxon>Nostoc</taxon>
    </lineage>
</organism>